<sequence length="455" mass="47563">MRFAFDEIEETIRMVQAEKLDIRTITMGINLRDCVSDNVETLSNKIYDKITKKAKNLVKVANDLESEFGIPIVNKRISVTPIALISESAKSTEDFIKIAKALDAAAKEVGVNFIGGYSALVHKGFTDGDLRLINSIPEALSSTERVCSSINVATTKAGINMDAVALMGKIIKKTAELTKDKDGIGAAKLVVFCNAPGDNPFMAGAFHGVGEGECVINVGVSGPGVILAALSKLDNKADFGQISEIIKKTSFKIARAGELIGRLAAERLNTSFGILDLSLAPTPEIGDSIANILEAMGLSKCGAPGTTAALALLNDAVKKGGVMASSYVGGLSGAFIPVSEDAGMISAVEAGALSIEKLEAMTCVCSVGLDMIAIPGDTPAETISAIIADEMAIGMINKKTTAVRIIPVPGKKEGDHVEFGGLLGHAPVMKVNNFSADTFIKRGGRIPAPLQSLNN</sequence>
<dbReference type="EMBL" id="CP000923">
    <property type="protein sequence ID" value="ABY93346.1"/>
    <property type="molecule type" value="Genomic_DNA"/>
</dbReference>
<dbReference type="RefSeq" id="WP_009052591.1">
    <property type="nucleotide sequence ID" value="NC_010320.1"/>
</dbReference>
<dbReference type="SMR" id="B0K3X5"/>
<dbReference type="KEGG" id="tex:Teth514_2074"/>
<dbReference type="HOGENOM" id="CLU_048704_0_0_9"/>
<dbReference type="Proteomes" id="UP000002155">
    <property type="component" value="Chromosome"/>
</dbReference>
<dbReference type="CDD" id="cd08025">
    <property type="entry name" value="RNR_PFL_like_DUF711"/>
    <property type="match status" value="1"/>
</dbReference>
<dbReference type="Gene3D" id="3.20.70.20">
    <property type="match status" value="1"/>
</dbReference>
<dbReference type="HAMAP" id="MF_01221">
    <property type="entry name" value="UPF0210"/>
    <property type="match status" value="1"/>
</dbReference>
<dbReference type="InterPro" id="IPR007841">
    <property type="entry name" value="UPF0210"/>
</dbReference>
<dbReference type="NCBIfam" id="NF003700">
    <property type="entry name" value="PRK05313.1"/>
    <property type="match status" value="1"/>
</dbReference>
<dbReference type="PANTHER" id="PTHR37560:SF1">
    <property type="entry name" value="UPF0210 PROTEIN MJ1665"/>
    <property type="match status" value="1"/>
</dbReference>
<dbReference type="PANTHER" id="PTHR37560">
    <property type="entry name" value="UPF0210 PROTEIN SPR0218"/>
    <property type="match status" value="1"/>
</dbReference>
<dbReference type="Pfam" id="PF05167">
    <property type="entry name" value="DUF711"/>
    <property type="match status" value="1"/>
</dbReference>
<dbReference type="SUPFAM" id="SSF51998">
    <property type="entry name" value="PFL-like glycyl radical enzymes"/>
    <property type="match status" value="1"/>
</dbReference>
<accession>B0K3X5</accession>
<evidence type="ECO:0000255" key="1">
    <source>
        <dbReference type="HAMAP-Rule" id="MF_01221"/>
    </source>
</evidence>
<comment type="subunit">
    <text evidence="1">Homodimer.</text>
</comment>
<comment type="similarity">
    <text evidence="1">Belongs to the UPF0210 family.</text>
</comment>
<gene>
    <name type="ordered locus">Teth514_2074</name>
</gene>
<proteinExistence type="inferred from homology"/>
<organism>
    <name type="scientific">Thermoanaerobacter sp. (strain X514)</name>
    <dbReference type="NCBI Taxonomy" id="399726"/>
    <lineage>
        <taxon>Bacteria</taxon>
        <taxon>Bacillati</taxon>
        <taxon>Bacillota</taxon>
        <taxon>Clostridia</taxon>
        <taxon>Thermoanaerobacterales</taxon>
        <taxon>Thermoanaerobacteraceae</taxon>
        <taxon>Thermoanaerobacter</taxon>
    </lineage>
</organism>
<feature type="chain" id="PRO_1000213970" description="UPF0210 protein Teth514_2074">
    <location>
        <begin position="1"/>
        <end position="455"/>
    </location>
</feature>
<reference key="1">
    <citation type="submission" date="2008-01" db="EMBL/GenBank/DDBJ databases">
        <title>Complete sequence of Thermoanaerobacter sp. X514.</title>
        <authorList>
            <consortium name="US DOE Joint Genome Institute"/>
            <person name="Copeland A."/>
            <person name="Lucas S."/>
            <person name="Lapidus A."/>
            <person name="Barry K."/>
            <person name="Glavina del Rio T."/>
            <person name="Dalin E."/>
            <person name="Tice H."/>
            <person name="Pitluck S."/>
            <person name="Bruce D."/>
            <person name="Goodwin L."/>
            <person name="Saunders E."/>
            <person name="Brettin T."/>
            <person name="Detter J.C."/>
            <person name="Han C."/>
            <person name="Schmutz J."/>
            <person name="Larimer F."/>
            <person name="Land M."/>
            <person name="Hauser L."/>
            <person name="Kyrpides N."/>
            <person name="Kim E."/>
            <person name="Hemme C."/>
            <person name="Fields M.W."/>
            <person name="He Z."/>
            <person name="Zhou J."/>
            <person name="Richardson P."/>
        </authorList>
    </citation>
    <scope>NUCLEOTIDE SEQUENCE [LARGE SCALE GENOMIC DNA]</scope>
    <source>
        <strain>X514</strain>
    </source>
</reference>
<protein>
    <recommendedName>
        <fullName evidence="1">UPF0210 protein Teth514_2074</fullName>
    </recommendedName>
</protein>
<name>Y2074_THEPX</name>